<proteinExistence type="evidence at protein level"/>
<organism>
    <name type="scientific">Rotavirus A (strain RVA/Human/United Kingdom/ST3/1975/G4P2A[6])</name>
    <name type="common">RV-A</name>
    <name type="synonym">Rotavirus A (strain St. Thomas 3)</name>
    <dbReference type="NCBI Taxonomy" id="10960"/>
    <lineage>
        <taxon>Viruses</taxon>
        <taxon>Riboviria</taxon>
        <taxon>Orthornavirae</taxon>
        <taxon>Duplornaviricota</taxon>
        <taxon>Resentoviricetes</taxon>
        <taxon>Reovirales</taxon>
        <taxon>Sedoreoviridae</taxon>
        <taxon>Rotavirus</taxon>
        <taxon>Rotavirus A</taxon>
    </lineage>
</organism>
<dbReference type="EMBL" id="U59110">
    <property type="protein sequence ID" value="AAB81296.1"/>
    <property type="molecule type" value="mRNA"/>
</dbReference>
<dbReference type="EMBL" id="EF672617">
    <property type="protein sequence ID" value="ABV53297.1"/>
    <property type="molecule type" value="Genomic_RNA"/>
</dbReference>
<dbReference type="PDB" id="3MIW">
    <property type="method" value="X-ray"/>
    <property type="resolution" value="2.50 A"/>
    <property type="chains" value="A/B/C/D/E/F/G/H/I/J=95-146"/>
</dbReference>
<dbReference type="PDBsum" id="3MIW"/>
<dbReference type="SMR" id="Q82035"/>
<dbReference type="EvolutionaryTrace" id="Q82035"/>
<dbReference type="Proteomes" id="UP000007048">
    <property type="component" value="Genome"/>
</dbReference>
<dbReference type="GO" id="GO:0005576">
    <property type="term" value="C:extracellular region"/>
    <property type="evidence" value="ECO:0007669"/>
    <property type="project" value="UniProtKB-SubCell"/>
</dbReference>
<dbReference type="GO" id="GO:0044155">
    <property type="term" value="C:host caveola"/>
    <property type="evidence" value="ECO:0007669"/>
    <property type="project" value="UniProtKB-SubCell"/>
</dbReference>
<dbReference type="GO" id="GO:0044169">
    <property type="term" value="C:host cell rough endoplasmic reticulum membrane"/>
    <property type="evidence" value="ECO:0007669"/>
    <property type="project" value="UniProtKB-SubCell"/>
</dbReference>
<dbReference type="GO" id="GO:0016020">
    <property type="term" value="C:membrane"/>
    <property type="evidence" value="ECO:0007669"/>
    <property type="project" value="UniProtKB-UniRule"/>
</dbReference>
<dbReference type="GO" id="GO:0015267">
    <property type="term" value="F:channel activity"/>
    <property type="evidence" value="ECO:0007669"/>
    <property type="project" value="UniProtKB-KW"/>
</dbReference>
<dbReference type="GO" id="GO:0046872">
    <property type="term" value="F:metal ion binding"/>
    <property type="evidence" value="ECO:0007669"/>
    <property type="project" value="UniProtKB-UniRule"/>
</dbReference>
<dbReference type="GO" id="GO:0090729">
    <property type="term" value="F:toxin activity"/>
    <property type="evidence" value="ECO:0007669"/>
    <property type="project" value="UniProtKB-UniRule"/>
</dbReference>
<dbReference type="GO" id="GO:0034220">
    <property type="term" value="P:monoatomic ion transmembrane transport"/>
    <property type="evidence" value="ECO:0007669"/>
    <property type="project" value="UniProtKB-KW"/>
</dbReference>
<dbReference type="GO" id="GO:0039520">
    <property type="term" value="P:symbiont-mediated activation of host autophagy"/>
    <property type="evidence" value="ECO:0007669"/>
    <property type="project" value="UniProtKB-KW"/>
</dbReference>
<dbReference type="GO" id="GO:0016032">
    <property type="term" value="P:viral process"/>
    <property type="evidence" value="ECO:0007669"/>
    <property type="project" value="UniProtKB-UniRule"/>
</dbReference>
<dbReference type="Gene3D" id="1.20.5.430">
    <property type="match status" value="1"/>
</dbReference>
<dbReference type="HAMAP" id="MF_04091">
    <property type="entry name" value="ROTA_NSP4"/>
    <property type="match status" value="1"/>
</dbReference>
<dbReference type="InterPro" id="IPR002107">
    <property type="entry name" value="Rotavirus_NSP4"/>
</dbReference>
<dbReference type="Pfam" id="PF01452">
    <property type="entry name" value="Rota_NSP4"/>
    <property type="match status" value="1"/>
</dbReference>
<dbReference type="SUPFAM" id="SSF58030">
    <property type="entry name" value="Rotavirus nonstructural proteins"/>
    <property type="match status" value="1"/>
</dbReference>
<accession>Q82035</accession>
<accession>B3SRX2</accession>
<comment type="function">
    <text evidence="1">Plays an essential role in the virus replication cycle by acting as a viroporin. Creates a pore in the host endoplasmic reticulum and as a consequence releases Ca(2+) in the cytoplasm of infected cell. In turn, high levels of cytoplasmic calcium trigger membrane trafficking and transport of viral ER-associated proteins to viroplasms, sites of viral genome replication and immature particle assembly.</text>
</comment>
<comment type="function">
    <text evidence="1">The secreted form acts as an enterotoxin that causes phospholipase C-dependent elevation of the intracellular calcium concentration in host intestinal mucosa cells. Increased concentration of intracellular calcium disrupts the cytoskeleton and the tight junctions, raising the paracellular permeability. Potentiates chloride ion secretion through a calcium ion-dependent signaling pathway, inducing age-dependent diarrhea. To perform this enterotoxigenic role in vivo, NSP4 is released from infected enterocytes in a soluble form capable of diffusing within the intestinal lumen and interacting with host plasma membrane receptors on neighboring epithelial cells such as integrins ITGA1/ITGB1 and ITGA2/ITGB1.</text>
</comment>
<comment type="subunit">
    <text evidence="1">Homotetramer. Interacts with the immature particle in the viroplasm. Interacts with host CAV1, early and late in infection. Interacts with host integrin ITGA1/ITGB1 heterodimer. Interacts with host integrin ITGA2/ITGB1 heterodimer. Interaction with microtubules blocks trafficking to the Golgi apparatus.</text>
</comment>
<comment type="subcellular location">
    <subcellularLocation>
        <location evidence="1">Host rough endoplasmic reticulum membrane</location>
        <topology evidence="1">Single-pass type III membrane protein</topology>
    </subcellularLocation>
    <subcellularLocation>
        <location evidence="1">Host membrane</location>
        <location evidence="1">Host caveola</location>
        <topology evidence="1">Single-pass type III membrane protein</topology>
    </subcellularLocation>
    <subcellularLocation>
        <location evidence="1">Secreted</location>
    </subcellularLocation>
    <text evidence="1">NSP4 also localizes in vesicular structures which contain autophagosomal markers and associate with viroplasms in virus-infected cells. Additionally, a soluble form of glycosylated NSP4 is secreted despite retention of its transmembrane domain.</text>
</comment>
<comment type="domain">
    <text evidence="1">Binds 1 calcium ion per tetramer.</text>
</comment>
<comment type="PTM">
    <text evidence="1">The N-glycosyl content is primarily Man(9)GlcNAc, with a small amount of Man(8)GlcNAc.</text>
</comment>
<comment type="similarity">
    <text evidence="1">Belongs to the rotavirus NSP4 family.</text>
</comment>
<name>NSP4_ROTHT</name>
<feature type="chain" id="PRO_0000369486" description="Non-structural glycoprotein 4">
    <location>
        <begin position="1"/>
        <end position="175"/>
    </location>
</feature>
<feature type="topological domain" description="Lumenal" evidence="1">
    <location>
        <begin position="1"/>
        <end position="28"/>
    </location>
</feature>
<feature type="transmembrane region" description="Helical; Signal-anchor for type III membrane protein" evidence="1">
    <location>
        <begin position="29"/>
        <end position="51"/>
    </location>
</feature>
<feature type="topological domain" description="Cytoplasmic" evidence="1">
    <location>
        <begin position="52"/>
        <end position="175"/>
    </location>
</feature>
<feature type="binding site" evidence="1">
    <location>
        <position position="120"/>
    </location>
    <ligand>
        <name>Ca(2+)</name>
        <dbReference type="ChEBI" id="CHEBI:29108"/>
    </ligand>
</feature>
<feature type="binding site" evidence="1">
    <location>
        <position position="123"/>
    </location>
    <ligand>
        <name>Ca(2+)</name>
        <dbReference type="ChEBI" id="CHEBI:29108"/>
    </ligand>
</feature>
<feature type="glycosylation site" description="N-linked (GlcNAc...) asparagine; by host" evidence="1">
    <location>
        <position position="8"/>
    </location>
</feature>
<feature type="glycosylation site" description="N-linked (GlcNAc...) asparagine; by host" evidence="1">
    <location>
        <position position="18"/>
    </location>
</feature>
<feature type="sequence conflict" description="In Ref. 2; ABV53297." ref="2">
    <original>TS</original>
    <variation>AL</variation>
    <location>
        <begin position="15"/>
        <end position="16"/>
    </location>
</feature>
<feature type="sequence conflict" description="In Ref. 2; ABV53297." ref="2">
    <original>E</original>
    <variation>Q</variation>
    <location>
        <position position="26"/>
    </location>
</feature>
<feature type="sequence conflict" description="In Ref. 2; ABV53297." ref="2">
    <original>I</original>
    <variation>V</variation>
    <location>
        <position position="124"/>
    </location>
</feature>
<feature type="sequence conflict" description="In Ref. 2; ABV53297." ref="2">
    <original>N</original>
    <variation>D</variation>
    <location>
        <position position="140"/>
    </location>
</feature>
<feature type="sequence conflict" description="In Ref. 2; ABV53297." ref="2">
    <original>M</original>
    <variation>K</variation>
    <location>
        <position position="146"/>
    </location>
</feature>
<feature type="sequence conflict" description="In Ref. 2; ABV53297." ref="2">
    <original>R</original>
    <variation>G</variation>
    <location>
        <position position="162"/>
    </location>
</feature>
<feature type="helix" evidence="2">
    <location>
        <begin position="95"/>
        <end position="136"/>
    </location>
</feature>
<evidence type="ECO:0000255" key="1">
    <source>
        <dbReference type="HAMAP-Rule" id="MF_04091"/>
    </source>
</evidence>
<evidence type="ECO:0007829" key="2">
    <source>
        <dbReference type="PDB" id="3MIW"/>
    </source>
</evidence>
<organismHost>
    <name type="scientific">Homo sapiens</name>
    <name type="common">Human</name>
    <dbReference type="NCBI Taxonomy" id="9606"/>
</organismHost>
<keyword id="KW-0002">3D-structure</keyword>
<keyword id="KW-1072">Activation of host autophagy by virus</keyword>
<keyword id="KW-0106">Calcium</keyword>
<keyword id="KW-0260">Enterotoxin</keyword>
<keyword id="KW-0325">Glycoprotein</keyword>
<keyword id="KW-1038">Host endoplasmic reticulum</keyword>
<keyword id="KW-1043">Host membrane</keyword>
<keyword id="KW-0945">Host-virus interaction</keyword>
<keyword id="KW-0407">Ion channel</keyword>
<keyword id="KW-0406">Ion transport</keyword>
<keyword id="KW-0472">Membrane</keyword>
<keyword id="KW-0479">Metal-binding</keyword>
<keyword id="KW-0964">Secreted</keyword>
<keyword id="KW-0735">Signal-anchor</keyword>
<keyword id="KW-0800">Toxin</keyword>
<keyword id="KW-0812">Transmembrane</keyword>
<keyword id="KW-1133">Transmembrane helix</keyword>
<keyword id="KW-0813">Transport</keyword>
<keyword id="KW-1182">Viral ion channel</keyword>
<keyword id="KW-0843">Virulence</keyword>
<reference key="1">
    <citation type="journal article" date="1997" name="Virology">
        <title>Genetic characterization of the rotavirus nonstructural protein, NSP4.</title>
        <authorList>
            <person name="Kirkwood C.D."/>
            <person name="Palombo E.A."/>
        </authorList>
    </citation>
    <scope>NUCLEOTIDE SEQUENCE [MRNA]</scope>
</reference>
<reference key="2">
    <citation type="journal article" date="2008" name="J. Virol.">
        <title>Group A human rotavirus genomics: evidence that gene constellations are influenced by viral protein interactions.</title>
        <authorList>
            <person name="Heiman E.M."/>
            <person name="McDonald S.M."/>
            <person name="Barro M."/>
            <person name="Taraporewala Z.F."/>
            <person name="Bar-Magen T."/>
            <person name="Patton J.T."/>
        </authorList>
    </citation>
    <scope>NUCLEOTIDE SEQUENCE [GENOMIC RNA]</scope>
</reference>
<reference key="3">
    <citation type="journal article" date="2012" name="Acta Crystallogr. D">
        <title>A new pentameric structure of rotavirus NSP4 revealed by molecular replacement.</title>
        <authorList>
            <person name="Chacko A.R."/>
            <person name="Jeyakanthan J."/>
            <person name="Ueno G."/>
            <person name="Sekar K."/>
            <person name="Rao C.D."/>
            <person name="Dodson E.J."/>
            <person name="Suguna K."/>
            <person name="Read R.J."/>
        </authorList>
    </citation>
    <scope>X-RAY CRYSTALLOGRAPHY (2.50 ANGSTROMS) OF 95-146</scope>
    <scope>SUBUNIT</scope>
</reference>
<protein>
    <recommendedName>
        <fullName evidence="1">Non-structural glycoprotein 4</fullName>
        <shortName evidence="1">NSP4</shortName>
    </recommendedName>
    <alternativeName>
        <fullName evidence="1">NCVP5</fullName>
    </alternativeName>
    <alternativeName>
        <fullName evidence="1">NS28</fullName>
    </alternativeName>
</protein>
<sequence length="175" mass="20293">MDKLADLNYTLSVITSMNDTLHSIIEDPGMAYFPYIASVLTVLFTLHKASIPTMKIALKASKCSYKVIKYCVVTIINTLLKLAGYKEQVTTKDEIEQQMDRIVKEMRRQLEMIDKLTTREIEQIELLKRIHDNLITRPVNVIDMSMEFNQKNIKTLDEWESRKNPYEPSEVTASM</sequence>